<feature type="chain" id="PRO_0000065606" description="Transcriptional repressor TraM">
    <location>
        <begin position="1"/>
        <end position="102"/>
    </location>
</feature>
<organism>
    <name type="scientific">Agrobacterium fabrum (strain C58 / ATCC 33970)</name>
    <name type="common">Agrobacterium tumefaciens (strain C58)</name>
    <dbReference type="NCBI Taxonomy" id="176299"/>
    <lineage>
        <taxon>Bacteria</taxon>
        <taxon>Pseudomonadati</taxon>
        <taxon>Pseudomonadota</taxon>
        <taxon>Alphaproteobacteria</taxon>
        <taxon>Hyphomicrobiales</taxon>
        <taxon>Rhizobiaceae</taxon>
        <taxon>Rhizobium/Agrobacterium group</taxon>
        <taxon>Agrobacterium</taxon>
        <taxon>Agrobacterium tumefaciens complex</taxon>
    </lineage>
</organism>
<proteinExistence type="predicted"/>
<accession>Q44452</accession>
<protein>
    <recommendedName>
        <fullName>Transcriptional repressor TraM</fullName>
    </recommendedName>
</protein>
<geneLocation type="plasmid">
    <name>pTiC58</name>
</geneLocation>
<keyword id="KW-0184">Conjugation</keyword>
<keyword id="KW-0614">Plasmid</keyword>
<keyword id="KW-1185">Reference proteome</keyword>
<keyword id="KW-0678">Repressor</keyword>
<keyword id="KW-0804">Transcription</keyword>
<keyword id="KW-0805">Transcription regulation</keyword>
<sequence length="102" mass="11227">MESEDATLTKKVELRPLVGLTRGLHPADLEKLTIDAIRAHRRLVEKADELFQALPESYKSGKEVGGPQHLCYIEASIEMHAQMSAVSTLISILGYIPNATVN</sequence>
<name>TRAM_AGRFC</name>
<gene>
    <name type="primary">traM</name>
    <name type="ordered locus">Atu6131</name>
    <name type="ORF">AGR_pTi_bx139</name>
</gene>
<reference key="1">
    <citation type="journal article" date="1995" name="J. Bacteriol.">
        <title>A new regulatory element modulates homoserine lactone-mediated autoinduction of Ti plasmid conjugal transfer.</title>
        <authorList>
            <person name="Hwang I."/>
            <person name="Cook D.M."/>
            <person name="Farrand S.K."/>
        </authorList>
    </citation>
    <scope>NUCLEOTIDE SEQUENCE [GENOMIC DNA]</scope>
</reference>
<reference key="2">
    <citation type="journal article" date="2001" name="Science">
        <title>The genome of the natural genetic engineer Agrobacterium tumefaciens C58.</title>
        <authorList>
            <person name="Wood D.W."/>
            <person name="Setubal J.C."/>
            <person name="Kaul R."/>
            <person name="Monks D.E."/>
            <person name="Kitajima J.P."/>
            <person name="Okura V.K."/>
            <person name="Zhou Y."/>
            <person name="Chen L."/>
            <person name="Wood G.E."/>
            <person name="Almeida N.F. Jr."/>
            <person name="Woo L."/>
            <person name="Chen Y."/>
            <person name="Paulsen I.T."/>
            <person name="Eisen J.A."/>
            <person name="Karp P.D."/>
            <person name="Bovee D. Sr."/>
            <person name="Chapman P."/>
            <person name="Clendenning J."/>
            <person name="Deatherage G."/>
            <person name="Gillet W."/>
            <person name="Grant C."/>
            <person name="Kutyavin T."/>
            <person name="Levy R."/>
            <person name="Li M.-J."/>
            <person name="McClelland E."/>
            <person name="Palmieri A."/>
            <person name="Raymond C."/>
            <person name="Rouse G."/>
            <person name="Saenphimmachak C."/>
            <person name="Wu Z."/>
            <person name="Romero P."/>
            <person name="Gordon D."/>
            <person name="Zhang S."/>
            <person name="Yoo H."/>
            <person name="Tao Y."/>
            <person name="Biddle P."/>
            <person name="Jung M."/>
            <person name="Krespan W."/>
            <person name="Perry M."/>
            <person name="Gordon-Kamm B."/>
            <person name="Liao L."/>
            <person name="Kim S."/>
            <person name="Hendrick C."/>
            <person name="Zhao Z.-Y."/>
            <person name="Dolan M."/>
            <person name="Chumley F."/>
            <person name="Tingey S.V."/>
            <person name="Tomb J.-F."/>
            <person name="Gordon M.P."/>
            <person name="Olson M.V."/>
            <person name="Nester E.W."/>
        </authorList>
    </citation>
    <scope>NUCLEOTIDE SEQUENCE [LARGE SCALE GENOMIC DNA]</scope>
</reference>
<reference key="3">
    <citation type="journal article" date="2001" name="Science">
        <title>Genome sequence of the plant pathogen and biotechnology agent Agrobacterium tumefaciens C58.</title>
        <authorList>
            <person name="Goodner B."/>
            <person name="Hinkle G."/>
            <person name="Gattung S."/>
            <person name="Miller N."/>
            <person name="Blanchard M."/>
            <person name="Qurollo B."/>
            <person name="Goldman B.S."/>
            <person name="Cao Y."/>
            <person name="Askenazi M."/>
            <person name="Halling C."/>
            <person name="Mullin L."/>
            <person name="Houmiel K."/>
            <person name="Gordon J."/>
            <person name="Vaudin M."/>
            <person name="Iartchouk O."/>
            <person name="Epp A."/>
            <person name="Liu F."/>
            <person name="Wollam C."/>
            <person name="Allinger M."/>
            <person name="Doughty D."/>
            <person name="Scott C."/>
            <person name="Lappas C."/>
            <person name="Markelz B."/>
            <person name="Flanagan C."/>
            <person name="Crowell C."/>
            <person name="Gurson J."/>
            <person name="Lomo C."/>
            <person name="Sear C."/>
            <person name="Strub G."/>
            <person name="Cielo C."/>
            <person name="Slater S."/>
        </authorList>
    </citation>
    <scope>NUCLEOTIDE SEQUENCE [LARGE SCALE GENOMIC DNA]</scope>
    <source>
        <strain>C58 / ATCC 33970</strain>
    </source>
</reference>
<comment type="function">
    <text>Negatively regulates conjugation and the expression of tra genes by antagonizing TraR/AAI-dependent activation. TraM may either bind or modify TraR or AAI making them unavailable. Alternatively, TraM may bind tra promoters preventing TraR activation.</text>
</comment>
<dbReference type="EMBL" id="AF010180">
    <property type="protein sequence ID" value="AAC17210.1"/>
    <property type="molecule type" value="Genomic_DNA"/>
</dbReference>
<dbReference type="EMBL" id="AE007871">
    <property type="protein sequence ID" value="AAK91095.1"/>
    <property type="molecule type" value="Genomic_DNA"/>
</dbReference>
<dbReference type="PIR" id="AI3243">
    <property type="entry name" value="AI3243"/>
</dbReference>
<dbReference type="PIR" id="T03423">
    <property type="entry name" value="T03423"/>
</dbReference>
<dbReference type="RefSeq" id="NP_396654.1">
    <property type="nucleotide sequence ID" value="NC_003065.3"/>
</dbReference>
<dbReference type="RefSeq" id="WP_003523843.1">
    <property type="nucleotide sequence ID" value="NC_003065.3"/>
</dbReference>
<dbReference type="SMR" id="Q44452"/>
<dbReference type="EnsemblBacteria" id="AAK91095">
    <property type="protein sequence ID" value="AAK91095"/>
    <property type="gene ID" value="Atu6131"/>
</dbReference>
<dbReference type="GeneID" id="1137454"/>
<dbReference type="KEGG" id="atu:Atu6131"/>
<dbReference type="HOGENOM" id="CLU_2271418_0_0_5"/>
<dbReference type="OrthoDB" id="8246915at2"/>
<dbReference type="BioCyc" id="AGRO:ATU6131-MONOMER"/>
<dbReference type="Proteomes" id="UP000000813">
    <property type="component" value="Plasmid Ti"/>
</dbReference>
<dbReference type="GO" id="GO:0045892">
    <property type="term" value="P:negative regulation of DNA-templated transcription"/>
    <property type="evidence" value="ECO:0007669"/>
    <property type="project" value="InterPro"/>
</dbReference>
<dbReference type="Gene3D" id="1.10.287.160">
    <property type="entry name" value="HR1 repeat"/>
    <property type="match status" value="1"/>
</dbReference>
<dbReference type="InterPro" id="IPR015309">
    <property type="entry name" value="Tscrpt_rep_TraM"/>
</dbReference>
<dbReference type="InterPro" id="IPR036336">
    <property type="entry name" value="Tscrpt_rep_TraM_sf"/>
</dbReference>
<dbReference type="Pfam" id="PF09228">
    <property type="entry name" value="Prok-TraM"/>
    <property type="match status" value="1"/>
</dbReference>
<dbReference type="PIRSF" id="PIRSF017930">
    <property type="entry name" value="Transcript_repress_TraM"/>
    <property type="match status" value="1"/>
</dbReference>
<dbReference type="SUPFAM" id="SSF109631">
    <property type="entry name" value="Transcriptional repressor TraM"/>
    <property type="match status" value="1"/>
</dbReference>